<organism>
    <name type="scientific">Python regius</name>
    <name type="common">Ball python</name>
    <name type="synonym">Boa regia</name>
    <dbReference type="NCBI Taxonomy" id="51751"/>
    <lineage>
        <taxon>Eukaryota</taxon>
        <taxon>Metazoa</taxon>
        <taxon>Chordata</taxon>
        <taxon>Craniata</taxon>
        <taxon>Vertebrata</taxon>
        <taxon>Euteleostomi</taxon>
        <taxon>Lepidosauria</taxon>
        <taxon>Squamata</taxon>
        <taxon>Bifurcata</taxon>
        <taxon>Unidentata</taxon>
        <taxon>Episquamata</taxon>
        <taxon>Toxicofera</taxon>
        <taxon>Serpentes</taxon>
        <taxon>Henophidia</taxon>
        <taxon>Pythonidae</taxon>
        <taxon>Python</taxon>
    </lineage>
</organism>
<accession>Q9W7L3</accession>
<dbReference type="EC" id="1.1.1.27" evidence="2"/>
<dbReference type="EMBL" id="AF072585">
    <property type="protein sequence ID" value="AAD41642.1"/>
    <property type="molecule type" value="mRNA"/>
</dbReference>
<dbReference type="SMR" id="Q9W7L3"/>
<dbReference type="UniPathway" id="UPA00554">
    <property type="reaction ID" value="UER00611"/>
</dbReference>
<dbReference type="GO" id="GO:0005737">
    <property type="term" value="C:cytoplasm"/>
    <property type="evidence" value="ECO:0007669"/>
    <property type="project" value="UniProtKB-SubCell"/>
</dbReference>
<dbReference type="GO" id="GO:0004459">
    <property type="term" value="F:L-lactate dehydrogenase activity"/>
    <property type="evidence" value="ECO:0007669"/>
    <property type="project" value="UniProtKB-EC"/>
</dbReference>
<dbReference type="GO" id="GO:0006089">
    <property type="term" value="P:lactate metabolic process"/>
    <property type="evidence" value="ECO:0007669"/>
    <property type="project" value="TreeGrafter"/>
</dbReference>
<dbReference type="CDD" id="cd05293">
    <property type="entry name" value="LDH_1"/>
    <property type="match status" value="1"/>
</dbReference>
<dbReference type="FunFam" id="3.40.50.720:FF:000029">
    <property type="entry name" value="L-lactate dehydrogenase A chain"/>
    <property type="match status" value="1"/>
</dbReference>
<dbReference type="FunFam" id="3.90.110.10:FF:000003">
    <property type="entry name" value="L-lactate dehydrogenase A chain"/>
    <property type="match status" value="1"/>
</dbReference>
<dbReference type="Gene3D" id="3.90.110.10">
    <property type="entry name" value="Lactate dehydrogenase/glycoside hydrolase, family 4, C-terminal"/>
    <property type="match status" value="1"/>
</dbReference>
<dbReference type="Gene3D" id="3.40.50.720">
    <property type="entry name" value="NAD(P)-binding Rossmann-like Domain"/>
    <property type="match status" value="1"/>
</dbReference>
<dbReference type="HAMAP" id="MF_00488">
    <property type="entry name" value="Lactate_dehydrog"/>
    <property type="match status" value="1"/>
</dbReference>
<dbReference type="InterPro" id="IPR001557">
    <property type="entry name" value="L-lactate/malate_DH"/>
</dbReference>
<dbReference type="InterPro" id="IPR011304">
    <property type="entry name" value="L-lactate_DH"/>
</dbReference>
<dbReference type="InterPro" id="IPR018177">
    <property type="entry name" value="L-lactate_DH_AS"/>
</dbReference>
<dbReference type="InterPro" id="IPR022383">
    <property type="entry name" value="Lactate/malate_DH_C"/>
</dbReference>
<dbReference type="InterPro" id="IPR001236">
    <property type="entry name" value="Lactate/malate_DH_N"/>
</dbReference>
<dbReference type="InterPro" id="IPR015955">
    <property type="entry name" value="Lactate_DH/Glyco_Ohase_4_C"/>
</dbReference>
<dbReference type="InterPro" id="IPR036291">
    <property type="entry name" value="NAD(P)-bd_dom_sf"/>
</dbReference>
<dbReference type="NCBIfam" id="TIGR01771">
    <property type="entry name" value="L-LDH-NAD"/>
    <property type="match status" value="1"/>
</dbReference>
<dbReference type="PANTHER" id="PTHR43128">
    <property type="entry name" value="L-2-HYDROXYCARBOXYLATE DEHYDROGENASE (NAD(P)(+))"/>
    <property type="match status" value="1"/>
</dbReference>
<dbReference type="PANTHER" id="PTHR43128:SF10">
    <property type="entry name" value="L-LACTATE DEHYDROGENASE A CHAIN"/>
    <property type="match status" value="1"/>
</dbReference>
<dbReference type="Pfam" id="PF02866">
    <property type="entry name" value="Ldh_1_C"/>
    <property type="match status" value="1"/>
</dbReference>
<dbReference type="Pfam" id="PF00056">
    <property type="entry name" value="Ldh_1_N"/>
    <property type="match status" value="1"/>
</dbReference>
<dbReference type="PIRSF" id="PIRSF000102">
    <property type="entry name" value="Lac_mal_DH"/>
    <property type="match status" value="1"/>
</dbReference>
<dbReference type="PRINTS" id="PR00086">
    <property type="entry name" value="LLDHDRGNASE"/>
</dbReference>
<dbReference type="SUPFAM" id="SSF56327">
    <property type="entry name" value="LDH C-terminal domain-like"/>
    <property type="match status" value="1"/>
</dbReference>
<dbReference type="SUPFAM" id="SSF51735">
    <property type="entry name" value="NAD(P)-binding Rossmann-fold domains"/>
    <property type="match status" value="1"/>
</dbReference>
<dbReference type="PROSITE" id="PS00064">
    <property type="entry name" value="L_LDH"/>
    <property type="match status" value="1"/>
</dbReference>
<protein>
    <recommendedName>
        <fullName>L-lactate dehydrogenase A chain</fullName>
        <shortName>LDH-A</shortName>
        <ecNumber evidence="2">1.1.1.27</ecNumber>
    </recommendedName>
</protein>
<keyword id="KW-0963">Cytoplasm</keyword>
<keyword id="KW-0520">NAD</keyword>
<keyword id="KW-0560">Oxidoreductase</keyword>
<feature type="initiator methionine" description="Removed" evidence="1">
    <location>
        <position position="1"/>
    </location>
</feature>
<feature type="chain" id="PRO_0000168425" description="L-lactate dehydrogenase A chain">
    <location>
        <begin position="2"/>
        <end position="332"/>
    </location>
</feature>
<feature type="active site" description="Proton acceptor" evidence="1">
    <location>
        <position position="193"/>
    </location>
</feature>
<feature type="binding site" evidence="1">
    <location>
        <begin position="29"/>
        <end position="57"/>
    </location>
    <ligand>
        <name>NAD(+)</name>
        <dbReference type="ChEBI" id="CHEBI:57540"/>
    </ligand>
</feature>
<feature type="binding site" evidence="1">
    <location>
        <position position="99"/>
    </location>
    <ligand>
        <name>NAD(+)</name>
        <dbReference type="ChEBI" id="CHEBI:57540"/>
    </ligand>
</feature>
<feature type="binding site" evidence="1">
    <location>
        <position position="106"/>
    </location>
    <ligand>
        <name>substrate</name>
    </ligand>
</feature>
<feature type="binding site" evidence="1">
    <location>
        <position position="138"/>
    </location>
    <ligand>
        <name>NAD(+)</name>
        <dbReference type="ChEBI" id="CHEBI:57540"/>
    </ligand>
</feature>
<feature type="binding site" evidence="1">
    <location>
        <position position="138"/>
    </location>
    <ligand>
        <name>substrate</name>
    </ligand>
</feature>
<feature type="binding site" evidence="1">
    <location>
        <position position="169"/>
    </location>
    <ligand>
        <name>substrate</name>
    </ligand>
</feature>
<feature type="binding site" evidence="1">
    <location>
        <position position="248"/>
    </location>
    <ligand>
        <name>substrate</name>
    </ligand>
</feature>
<reference key="1">
    <citation type="journal article" date="1999" name="Mol. Phylogenet. Evol.">
        <title>Molecular evidence for a clade of turtles.</title>
        <authorList>
            <person name="Mannen H."/>
            <person name="Li S.S.-L."/>
        </authorList>
    </citation>
    <scope>NUCLEOTIDE SEQUENCE [MRNA]</scope>
    <source>
        <tissue>Muscle</tissue>
    </source>
</reference>
<name>LDHA_PYTRG</name>
<comment type="function">
    <text evidence="2">Interconverts simultaneously and stereospecifically pyruvate and lactate with concomitant interconversion of NADH and NAD(+).</text>
</comment>
<comment type="catalytic activity">
    <reaction evidence="2">
        <text>(S)-lactate + NAD(+) = pyruvate + NADH + H(+)</text>
        <dbReference type="Rhea" id="RHEA:23444"/>
        <dbReference type="ChEBI" id="CHEBI:15361"/>
        <dbReference type="ChEBI" id="CHEBI:15378"/>
        <dbReference type="ChEBI" id="CHEBI:16651"/>
        <dbReference type="ChEBI" id="CHEBI:57540"/>
        <dbReference type="ChEBI" id="CHEBI:57945"/>
        <dbReference type="EC" id="1.1.1.27"/>
    </reaction>
    <physiologicalReaction direction="left-to-right" evidence="2">
        <dbReference type="Rhea" id="RHEA:23445"/>
    </physiologicalReaction>
    <physiologicalReaction direction="right-to-left" evidence="2">
        <dbReference type="Rhea" id="RHEA:23446"/>
    </physiologicalReaction>
</comment>
<comment type="pathway">
    <text evidence="2">Fermentation; pyruvate fermentation to lactate; (S)-lactate from pyruvate: step 1/1.</text>
</comment>
<comment type="subunit">
    <text evidence="1">Homotetramer.</text>
</comment>
<comment type="subcellular location">
    <subcellularLocation>
        <location evidence="1">Cytoplasm</location>
    </subcellularLocation>
</comment>
<comment type="similarity">
    <text evidence="3">Belongs to the LDH/MDH superfamily. LDH family.</text>
</comment>
<proteinExistence type="evidence at transcript level"/>
<sequence length="332" mass="36704">MSLKEKLIENVHKEEHPQAHNKITVVGVGAVGMACAISILMKDLADELALVDVVEDKLKGEMLDLQHGSLFLRTPKIVSGKDYAVTAHSKLVIITAGARQQEGEFRLNLVQRNVNIFKFIIPNVVKYSPHCKLLVVSNPVDILTYVAWKISGFPKHRVIGSGCNLDSARFRHLLGERLGIHPLSCHSWIVGEHGDSSVPVWSGVNVAGVCLKELHPELGTDGDKENWKEVHKQVVDSAYEVIKLKGYTSWAIGLSVADLAETIMKNLRRVHPISTMVKGMHGVKDDVFLSVPCVLGSSGITDVIKMTLKSEEEDKLRKSADTLWGIQKELQF</sequence>
<gene>
    <name type="primary">LDHA</name>
</gene>
<evidence type="ECO:0000250" key="1"/>
<evidence type="ECO:0000250" key="2">
    <source>
        <dbReference type="UniProtKB" id="P00338"/>
    </source>
</evidence>
<evidence type="ECO:0000305" key="3"/>